<proteinExistence type="inferred from homology"/>
<protein>
    <recommendedName>
        <fullName evidence="1">2-aminoethylphosphonate--pyruvate transaminase</fullName>
        <ecNumber evidence="1">2.6.1.37</ecNumber>
    </recommendedName>
    <alternativeName>
        <fullName evidence="1">2-aminoethylphosphonate aminotransferase</fullName>
    </alternativeName>
    <alternativeName>
        <fullName evidence="1">AEP transaminase</fullName>
        <shortName evidence="1">AEPT</shortName>
    </alternativeName>
</protein>
<reference key="1">
    <citation type="journal article" date="2004" name="Proc. Natl. Acad. Sci. U.S.A.">
        <title>Genomic plasticity of the causative agent of melioidosis, Burkholderia pseudomallei.</title>
        <authorList>
            <person name="Holden M.T.G."/>
            <person name="Titball R.W."/>
            <person name="Peacock S.J."/>
            <person name="Cerdeno-Tarraga A.-M."/>
            <person name="Atkins T."/>
            <person name="Crossman L.C."/>
            <person name="Pitt T."/>
            <person name="Churcher C."/>
            <person name="Mungall K.L."/>
            <person name="Bentley S.D."/>
            <person name="Sebaihia M."/>
            <person name="Thomson N.R."/>
            <person name="Bason N."/>
            <person name="Beacham I.R."/>
            <person name="Brooks K."/>
            <person name="Brown K.A."/>
            <person name="Brown N.F."/>
            <person name="Challis G.L."/>
            <person name="Cherevach I."/>
            <person name="Chillingworth T."/>
            <person name="Cronin A."/>
            <person name="Crossett B."/>
            <person name="Davis P."/>
            <person name="DeShazer D."/>
            <person name="Feltwell T."/>
            <person name="Fraser A."/>
            <person name="Hance Z."/>
            <person name="Hauser H."/>
            <person name="Holroyd S."/>
            <person name="Jagels K."/>
            <person name="Keith K.E."/>
            <person name="Maddison M."/>
            <person name="Moule S."/>
            <person name="Price C."/>
            <person name="Quail M.A."/>
            <person name="Rabbinowitsch E."/>
            <person name="Rutherford K."/>
            <person name="Sanders M."/>
            <person name="Simmonds M."/>
            <person name="Songsivilai S."/>
            <person name="Stevens K."/>
            <person name="Tumapa S."/>
            <person name="Vesaratchavest M."/>
            <person name="Whitehead S."/>
            <person name="Yeats C."/>
            <person name="Barrell B.G."/>
            <person name="Oyston P.C.F."/>
            <person name="Parkhill J."/>
        </authorList>
    </citation>
    <scope>NUCLEOTIDE SEQUENCE [LARGE SCALE GENOMIC DNA]</scope>
    <source>
        <strain>K96243</strain>
    </source>
</reference>
<organism>
    <name type="scientific">Burkholderia pseudomallei (strain K96243)</name>
    <dbReference type="NCBI Taxonomy" id="272560"/>
    <lineage>
        <taxon>Bacteria</taxon>
        <taxon>Pseudomonadati</taxon>
        <taxon>Pseudomonadota</taxon>
        <taxon>Betaproteobacteria</taxon>
        <taxon>Burkholderiales</taxon>
        <taxon>Burkholderiaceae</taxon>
        <taxon>Burkholderia</taxon>
        <taxon>pseudomallei group</taxon>
    </lineage>
</organism>
<evidence type="ECO:0000255" key="1">
    <source>
        <dbReference type="HAMAP-Rule" id="MF_01376"/>
    </source>
</evidence>
<evidence type="ECO:0000305" key="2"/>
<accession>Q63NF6</accession>
<name>PHNW_BURPS</name>
<gene>
    <name evidence="1" type="primary">phnW</name>
    <name type="ordered locus">BPSS0343</name>
</gene>
<keyword id="KW-0032">Aminotransferase</keyword>
<keyword id="KW-0663">Pyridoxal phosphate</keyword>
<keyword id="KW-0670">Pyruvate</keyword>
<keyword id="KW-1185">Reference proteome</keyword>
<keyword id="KW-0808">Transferase</keyword>
<comment type="function">
    <text evidence="1">Involved in phosphonate degradation.</text>
</comment>
<comment type="catalytic activity">
    <reaction evidence="1">
        <text>(2-aminoethyl)phosphonate + pyruvate = phosphonoacetaldehyde + L-alanine</text>
        <dbReference type="Rhea" id="RHEA:17021"/>
        <dbReference type="ChEBI" id="CHEBI:15361"/>
        <dbReference type="ChEBI" id="CHEBI:57418"/>
        <dbReference type="ChEBI" id="CHEBI:57972"/>
        <dbReference type="ChEBI" id="CHEBI:58383"/>
        <dbReference type="EC" id="2.6.1.37"/>
    </reaction>
</comment>
<comment type="cofactor">
    <cofactor evidence="1">
        <name>pyridoxal 5'-phosphate</name>
        <dbReference type="ChEBI" id="CHEBI:597326"/>
    </cofactor>
</comment>
<comment type="subunit">
    <text evidence="1">Homodimer.</text>
</comment>
<comment type="similarity">
    <text evidence="1">Belongs to the class-V pyridoxal-phosphate-dependent aminotransferase family. PhnW subfamily.</text>
</comment>
<comment type="caution">
    <text evidence="2">The second enzyme involved in phosphonate degradation (PhnX, EC 3.11.1.1) is not found in this organism. The function of this enzyme is therefore uncertain.</text>
</comment>
<dbReference type="EC" id="2.6.1.37" evidence="1"/>
<dbReference type="EMBL" id="BX571966">
    <property type="protein sequence ID" value="CAH37791.1"/>
    <property type="molecule type" value="Genomic_DNA"/>
</dbReference>
<dbReference type="RefSeq" id="WP_004538788.1">
    <property type="nucleotide sequence ID" value="NZ_CP009537.1"/>
</dbReference>
<dbReference type="RefSeq" id="YP_110363.1">
    <property type="nucleotide sequence ID" value="NC_006351.1"/>
</dbReference>
<dbReference type="SMR" id="Q63NF6"/>
<dbReference type="STRING" id="272560.BPSS0343"/>
<dbReference type="KEGG" id="bps:BPSS0343"/>
<dbReference type="PATRIC" id="fig|272560.51.peg.6462"/>
<dbReference type="eggNOG" id="COG0075">
    <property type="taxonomic scope" value="Bacteria"/>
</dbReference>
<dbReference type="Proteomes" id="UP000000605">
    <property type="component" value="Chromosome 2"/>
</dbReference>
<dbReference type="GO" id="GO:0047304">
    <property type="term" value="F:2-aminoethylphosphonate-pyruvate transaminase activity"/>
    <property type="evidence" value="ECO:0007669"/>
    <property type="project" value="UniProtKB-UniRule"/>
</dbReference>
<dbReference type="GO" id="GO:0019700">
    <property type="term" value="P:organic phosphonate catabolic process"/>
    <property type="evidence" value="ECO:0007669"/>
    <property type="project" value="InterPro"/>
</dbReference>
<dbReference type="Gene3D" id="3.90.1150.10">
    <property type="entry name" value="Aspartate Aminotransferase, domain 1"/>
    <property type="match status" value="1"/>
</dbReference>
<dbReference type="Gene3D" id="3.40.640.10">
    <property type="entry name" value="Type I PLP-dependent aspartate aminotransferase-like (Major domain)"/>
    <property type="match status" value="1"/>
</dbReference>
<dbReference type="HAMAP" id="MF_01376">
    <property type="entry name" value="PhnW_aminotrans_5"/>
    <property type="match status" value="1"/>
</dbReference>
<dbReference type="InterPro" id="IPR000192">
    <property type="entry name" value="Aminotrans_V_dom"/>
</dbReference>
<dbReference type="InterPro" id="IPR012703">
    <property type="entry name" value="NH2EtPonate_pyrv_transaminase"/>
</dbReference>
<dbReference type="InterPro" id="IPR015424">
    <property type="entry name" value="PyrdxlP-dep_Trfase"/>
</dbReference>
<dbReference type="InterPro" id="IPR015421">
    <property type="entry name" value="PyrdxlP-dep_Trfase_major"/>
</dbReference>
<dbReference type="InterPro" id="IPR015422">
    <property type="entry name" value="PyrdxlP-dep_Trfase_small"/>
</dbReference>
<dbReference type="InterPro" id="IPR024169">
    <property type="entry name" value="SP_NH2Trfase/AEP_transaminase"/>
</dbReference>
<dbReference type="NCBIfam" id="TIGR03301">
    <property type="entry name" value="PhnW-AepZ"/>
    <property type="match status" value="1"/>
</dbReference>
<dbReference type="NCBIfam" id="NF010006">
    <property type="entry name" value="PRK13479.1"/>
    <property type="match status" value="1"/>
</dbReference>
<dbReference type="NCBIfam" id="TIGR02326">
    <property type="entry name" value="transamin_PhnW"/>
    <property type="match status" value="1"/>
</dbReference>
<dbReference type="PANTHER" id="PTHR42778">
    <property type="entry name" value="2-AMINOETHYLPHOSPHONATE--PYRUVATE TRANSAMINASE"/>
    <property type="match status" value="1"/>
</dbReference>
<dbReference type="PANTHER" id="PTHR42778:SF1">
    <property type="entry name" value="2-AMINOETHYLPHOSPHONATE--PYRUVATE TRANSAMINASE"/>
    <property type="match status" value="1"/>
</dbReference>
<dbReference type="Pfam" id="PF00266">
    <property type="entry name" value="Aminotran_5"/>
    <property type="match status" value="1"/>
</dbReference>
<dbReference type="PIRSF" id="PIRSF000524">
    <property type="entry name" value="SPT"/>
    <property type="match status" value="1"/>
</dbReference>
<dbReference type="SUPFAM" id="SSF53383">
    <property type="entry name" value="PLP-dependent transferases"/>
    <property type="match status" value="1"/>
</dbReference>
<sequence>MPERDPILLTPGPLTTSRMTRDAMLRDWGSWDAAFNRLTKSVCADLVRIAGGGDAYVCVPLQGSGTFAVEATLGTLVPRDARVLVPNNGAYCARIAAILRRLGIAHVELPFAEDEPASAHAIDAALARDARLTHVALVHLETSAGLLNPLDDIAAVCRARGRALIVDAMSSFGALPIALAASDIDALISASGKCLEGVPGMGFAIVRRSALEAAEGRSPSVALDLHDQYAYMQRTSQWRFTPPTHVLAALRAALDQFFDEGGQPARGARYARNCATLVDGMRALGFEPFLDARAQASVIVTFYAPADPAYAFPAFYAAVRDAGYVLYPGKLTTADTFRVGCIGALGADEMRGAVAAIGGALESLGIAMR</sequence>
<feature type="chain" id="PRO_0000286763" description="2-aminoethylphosphonate--pyruvate transaminase">
    <location>
        <begin position="1"/>
        <end position="369"/>
    </location>
</feature>
<feature type="modified residue" description="N6-(pyridoxal phosphate)lysine" evidence="1">
    <location>
        <position position="193"/>
    </location>
</feature>